<evidence type="ECO:0000255" key="1">
    <source>
        <dbReference type="HAMAP-Rule" id="MF_01103"/>
    </source>
</evidence>
<protein>
    <recommendedName>
        <fullName evidence="1">UPF0291 protein llmg_1475</fullName>
    </recommendedName>
</protein>
<name>Y1475_LACLM</name>
<dbReference type="EMBL" id="AM406671">
    <property type="protein sequence ID" value="CAL98054.1"/>
    <property type="molecule type" value="Genomic_DNA"/>
</dbReference>
<dbReference type="RefSeq" id="WP_011835325.1">
    <property type="nucleotide sequence ID" value="NC_009004.1"/>
</dbReference>
<dbReference type="SMR" id="A2RL87"/>
<dbReference type="STRING" id="416870.llmg_1475"/>
<dbReference type="GeneID" id="61109343"/>
<dbReference type="KEGG" id="llm:llmg_1475"/>
<dbReference type="eggNOG" id="COG4224">
    <property type="taxonomic scope" value="Bacteria"/>
</dbReference>
<dbReference type="HOGENOM" id="CLU_173137_0_2_9"/>
<dbReference type="OrthoDB" id="390105at2"/>
<dbReference type="PhylomeDB" id="A2RL87"/>
<dbReference type="Proteomes" id="UP000000364">
    <property type="component" value="Chromosome"/>
</dbReference>
<dbReference type="GO" id="GO:0005737">
    <property type="term" value="C:cytoplasm"/>
    <property type="evidence" value="ECO:0007669"/>
    <property type="project" value="UniProtKB-SubCell"/>
</dbReference>
<dbReference type="Gene3D" id="1.10.287.540">
    <property type="entry name" value="Helix hairpin bin"/>
    <property type="match status" value="1"/>
</dbReference>
<dbReference type="HAMAP" id="MF_01103">
    <property type="entry name" value="UPF0291"/>
    <property type="match status" value="1"/>
</dbReference>
<dbReference type="InterPro" id="IPR009242">
    <property type="entry name" value="DUF896"/>
</dbReference>
<dbReference type="PANTHER" id="PTHR37300">
    <property type="entry name" value="UPF0291 PROTEIN CBO2609/CLC_2481"/>
    <property type="match status" value="1"/>
</dbReference>
<dbReference type="PANTHER" id="PTHR37300:SF1">
    <property type="entry name" value="UPF0291 PROTEIN YNZC"/>
    <property type="match status" value="1"/>
</dbReference>
<dbReference type="Pfam" id="PF05979">
    <property type="entry name" value="DUF896"/>
    <property type="match status" value="1"/>
</dbReference>
<dbReference type="SUPFAM" id="SSF158221">
    <property type="entry name" value="YnzC-like"/>
    <property type="match status" value="1"/>
</dbReference>
<keyword id="KW-0963">Cytoplasm</keyword>
<proteinExistence type="inferred from homology"/>
<accession>A2RL87</accession>
<gene>
    <name type="ordered locus">llmg_1475</name>
</gene>
<sequence>MTITNEQVERINELARKKKAEGLSEAELEEQALLRRAYLDSVKANFRSQVETIKVIDEKTGEDVTPDKLKEIQRKNGMRD</sequence>
<reference key="1">
    <citation type="journal article" date="2007" name="J. Bacteriol.">
        <title>The complete genome sequence of the lactic acid bacterial paradigm Lactococcus lactis subsp. cremoris MG1363.</title>
        <authorList>
            <person name="Wegmann U."/>
            <person name="O'Connell-Motherway M."/>
            <person name="Zomer A."/>
            <person name="Buist G."/>
            <person name="Shearman C."/>
            <person name="Canchaya C."/>
            <person name="Ventura M."/>
            <person name="Goesmann A."/>
            <person name="Gasson M.J."/>
            <person name="Kuipers O.P."/>
            <person name="van Sinderen D."/>
            <person name="Kok J."/>
        </authorList>
    </citation>
    <scope>NUCLEOTIDE SEQUENCE [LARGE SCALE GENOMIC DNA]</scope>
    <source>
        <strain>MG1363</strain>
    </source>
</reference>
<comment type="subcellular location">
    <subcellularLocation>
        <location evidence="1">Cytoplasm</location>
    </subcellularLocation>
</comment>
<comment type="similarity">
    <text evidence="1">Belongs to the UPF0291 family.</text>
</comment>
<organism>
    <name type="scientific">Lactococcus lactis subsp. cremoris (strain MG1363)</name>
    <dbReference type="NCBI Taxonomy" id="416870"/>
    <lineage>
        <taxon>Bacteria</taxon>
        <taxon>Bacillati</taxon>
        <taxon>Bacillota</taxon>
        <taxon>Bacilli</taxon>
        <taxon>Lactobacillales</taxon>
        <taxon>Streptococcaceae</taxon>
        <taxon>Lactococcus</taxon>
        <taxon>Lactococcus cremoris subsp. cremoris</taxon>
    </lineage>
</organism>
<feature type="chain" id="PRO_1000065026" description="UPF0291 protein llmg_1475">
    <location>
        <begin position="1"/>
        <end position="80"/>
    </location>
</feature>